<organism>
    <name type="scientific">Francisella tularensis subsp. novicida (strain U112)</name>
    <dbReference type="NCBI Taxonomy" id="401614"/>
    <lineage>
        <taxon>Bacteria</taxon>
        <taxon>Pseudomonadati</taxon>
        <taxon>Pseudomonadota</taxon>
        <taxon>Gammaproteobacteria</taxon>
        <taxon>Thiotrichales</taxon>
        <taxon>Francisellaceae</taxon>
        <taxon>Francisella</taxon>
    </lineage>
</organism>
<accession>A0Q5C7</accession>
<keyword id="KW-0408">Iron</keyword>
<gene>
    <name type="ordered locus">FTN_0547</name>
</gene>
<protein>
    <recommendedName>
        <fullName evidence="1">Probable Fe(2+)-trafficking protein</fullName>
    </recommendedName>
</protein>
<evidence type="ECO:0000255" key="1">
    <source>
        <dbReference type="HAMAP-Rule" id="MF_00686"/>
    </source>
</evidence>
<sequence>MTKVFCKKYHQELDAIPFQPLPGELGKKIHNEISNKAWQAWLAHQTILINEYRLNLIEPKAKEFLKEEMHKFLFEGKEEKPEQFSEI</sequence>
<proteinExistence type="inferred from homology"/>
<feature type="chain" id="PRO_1000045036" description="Probable Fe(2+)-trafficking protein">
    <location>
        <begin position="1"/>
        <end position="87"/>
    </location>
</feature>
<reference key="1">
    <citation type="journal article" date="2007" name="Genome Biol.">
        <title>Comparison of Francisella tularensis genomes reveals evolutionary events associated with the emergence of human pathogenic strains.</title>
        <authorList>
            <person name="Rohmer L."/>
            <person name="Fong C."/>
            <person name="Abmayr S."/>
            <person name="Wasnick M."/>
            <person name="Larson Freeman T.J."/>
            <person name="Radey M."/>
            <person name="Guina T."/>
            <person name="Svensson K."/>
            <person name="Hayden H.S."/>
            <person name="Jacobs M."/>
            <person name="Gallagher L.A."/>
            <person name="Manoil C."/>
            <person name="Ernst R.K."/>
            <person name="Drees B."/>
            <person name="Buckley D."/>
            <person name="Haugen E."/>
            <person name="Bovee D."/>
            <person name="Zhou Y."/>
            <person name="Chang J."/>
            <person name="Levy R."/>
            <person name="Lim R."/>
            <person name="Gillett W."/>
            <person name="Guenthener D."/>
            <person name="Kang A."/>
            <person name="Shaffer S.A."/>
            <person name="Taylor G."/>
            <person name="Chen J."/>
            <person name="Gallis B."/>
            <person name="D'Argenio D.A."/>
            <person name="Forsman M."/>
            <person name="Olson M.V."/>
            <person name="Goodlett D.R."/>
            <person name="Kaul R."/>
            <person name="Miller S.I."/>
            <person name="Brittnacher M.J."/>
        </authorList>
    </citation>
    <scope>NUCLEOTIDE SEQUENCE [LARGE SCALE GENOMIC DNA]</scope>
    <source>
        <strain>U112</strain>
    </source>
</reference>
<dbReference type="EMBL" id="CP000439">
    <property type="protein sequence ID" value="ABK89442.1"/>
    <property type="molecule type" value="Genomic_DNA"/>
</dbReference>
<dbReference type="RefSeq" id="WP_003026946.1">
    <property type="nucleotide sequence ID" value="NZ_CP009633.1"/>
</dbReference>
<dbReference type="SMR" id="A0Q5C7"/>
<dbReference type="KEGG" id="ftn:FTN_0547"/>
<dbReference type="KEGG" id="ftx:AW25_1482"/>
<dbReference type="Proteomes" id="UP000000762">
    <property type="component" value="Chromosome"/>
</dbReference>
<dbReference type="GO" id="GO:0005829">
    <property type="term" value="C:cytosol"/>
    <property type="evidence" value="ECO:0007669"/>
    <property type="project" value="TreeGrafter"/>
</dbReference>
<dbReference type="GO" id="GO:0005506">
    <property type="term" value="F:iron ion binding"/>
    <property type="evidence" value="ECO:0007669"/>
    <property type="project" value="UniProtKB-UniRule"/>
</dbReference>
<dbReference type="GO" id="GO:0034599">
    <property type="term" value="P:cellular response to oxidative stress"/>
    <property type="evidence" value="ECO:0007669"/>
    <property type="project" value="TreeGrafter"/>
</dbReference>
<dbReference type="Gene3D" id="1.10.3880.10">
    <property type="entry name" value="Fe(II) trafficking protein YggX"/>
    <property type="match status" value="1"/>
</dbReference>
<dbReference type="HAMAP" id="MF_00686">
    <property type="entry name" value="Fe_traffic_YggX"/>
    <property type="match status" value="1"/>
</dbReference>
<dbReference type="InterPro" id="IPR007457">
    <property type="entry name" value="Fe_traffick_prot_YggX"/>
</dbReference>
<dbReference type="InterPro" id="IPR036766">
    <property type="entry name" value="Fe_traffick_prot_YggX_sf"/>
</dbReference>
<dbReference type="NCBIfam" id="NF003817">
    <property type="entry name" value="PRK05408.1"/>
    <property type="match status" value="1"/>
</dbReference>
<dbReference type="PANTHER" id="PTHR36965">
    <property type="entry name" value="FE(2+)-TRAFFICKING PROTEIN-RELATED"/>
    <property type="match status" value="1"/>
</dbReference>
<dbReference type="PANTHER" id="PTHR36965:SF1">
    <property type="entry name" value="FE(2+)-TRAFFICKING PROTEIN-RELATED"/>
    <property type="match status" value="1"/>
</dbReference>
<dbReference type="Pfam" id="PF04362">
    <property type="entry name" value="Iron_traffic"/>
    <property type="match status" value="1"/>
</dbReference>
<dbReference type="PIRSF" id="PIRSF029827">
    <property type="entry name" value="Fe_traffic_YggX"/>
    <property type="match status" value="1"/>
</dbReference>
<dbReference type="SUPFAM" id="SSF111148">
    <property type="entry name" value="YggX-like"/>
    <property type="match status" value="1"/>
</dbReference>
<name>FETP_FRATN</name>
<comment type="function">
    <text evidence="1">Could be a mediator in iron transactions between iron acquisition and iron-requiring processes, such as synthesis and/or repair of Fe-S clusters in biosynthetic enzymes.</text>
</comment>
<comment type="similarity">
    <text evidence="1">Belongs to the Fe(2+)-trafficking protein family.</text>
</comment>